<gene>
    <name evidence="1" type="primary">rpoC</name>
    <name type="ordered locus">BTH_I3075</name>
</gene>
<comment type="function">
    <text evidence="1">DNA-dependent RNA polymerase catalyzes the transcription of DNA into RNA using the four ribonucleoside triphosphates as substrates.</text>
</comment>
<comment type="catalytic activity">
    <reaction evidence="1">
        <text>RNA(n) + a ribonucleoside 5'-triphosphate = RNA(n+1) + diphosphate</text>
        <dbReference type="Rhea" id="RHEA:21248"/>
        <dbReference type="Rhea" id="RHEA-COMP:14527"/>
        <dbReference type="Rhea" id="RHEA-COMP:17342"/>
        <dbReference type="ChEBI" id="CHEBI:33019"/>
        <dbReference type="ChEBI" id="CHEBI:61557"/>
        <dbReference type="ChEBI" id="CHEBI:140395"/>
        <dbReference type="EC" id="2.7.7.6"/>
    </reaction>
</comment>
<comment type="cofactor">
    <cofactor evidence="1">
        <name>Mg(2+)</name>
        <dbReference type="ChEBI" id="CHEBI:18420"/>
    </cofactor>
    <text evidence="1">Binds 1 Mg(2+) ion per subunit.</text>
</comment>
<comment type="cofactor">
    <cofactor evidence="1">
        <name>Zn(2+)</name>
        <dbReference type="ChEBI" id="CHEBI:29105"/>
    </cofactor>
    <text evidence="1">Binds 2 Zn(2+) ions per subunit.</text>
</comment>
<comment type="subunit">
    <text evidence="1">The RNAP catalytic core consists of 2 alpha, 1 beta, 1 beta' and 1 omega subunit. When a sigma factor is associated with the core the holoenzyme is formed, which can initiate transcription.</text>
</comment>
<comment type="similarity">
    <text evidence="1">Belongs to the RNA polymerase beta' chain family.</text>
</comment>
<protein>
    <recommendedName>
        <fullName evidence="1">DNA-directed RNA polymerase subunit beta'</fullName>
        <shortName evidence="1">RNAP subunit beta'</shortName>
        <ecNumber evidence="1">2.7.7.6</ecNumber>
    </recommendedName>
    <alternativeName>
        <fullName evidence="1">RNA polymerase subunit beta'</fullName>
    </alternativeName>
    <alternativeName>
        <fullName evidence="1">Transcriptase subunit beta'</fullName>
    </alternativeName>
</protein>
<evidence type="ECO:0000255" key="1">
    <source>
        <dbReference type="HAMAP-Rule" id="MF_01322"/>
    </source>
</evidence>
<evidence type="ECO:0000256" key="2">
    <source>
        <dbReference type="SAM" id="MobiDB-lite"/>
    </source>
</evidence>
<name>RPOC_BURTA</name>
<feature type="chain" id="PRO_0000240799" description="DNA-directed RNA polymerase subunit beta'">
    <location>
        <begin position="1"/>
        <end position="1412"/>
    </location>
</feature>
<feature type="region of interest" description="Disordered" evidence="2">
    <location>
        <begin position="1392"/>
        <end position="1412"/>
    </location>
</feature>
<feature type="binding site" evidence="1">
    <location>
        <position position="70"/>
    </location>
    <ligand>
        <name>Zn(2+)</name>
        <dbReference type="ChEBI" id="CHEBI:29105"/>
        <label>1</label>
    </ligand>
</feature>
<feature type="binding site" evidence="1">
    <location>
        <position position="72"/>
    </location>
    <ligand>
        <name>Zn(2+)</name>
        <dbReference type="ChEBI" id="CHEBI:29105"/>
        <label>1</label>
    </ligand>
</feature>
<feature type="binding site" evidence="1">
    <location>
        <position position="85"/>
    </location>
    <ligand>
        <name>Zn(2+)</name>
        <dbReference type="ChEBI" id="CHEBI:29105"/>
        <label>1</label>
    </ligand>
</feature>
<feature type="binding site" evidence="1">
    <location>
        <position position="88"/>
    </location>
    <ligand>
        <name>Zn(2+)</name>
        <dbReference type="ChEBI" id="CHEBI:29105"/>
        <label>1</label>
    </ligand>
</feature>
<feature type="binding site" evidence="1">
    <location>
        <position position="460"/>
    </location>
    <ligand>
        <name>Mg(2+)</name>
        <dbReference type="ChEBI" id="CHEBI:18420"/>
    </ligand>
</feature>
<feature type="binding site" evidence="1">
    <location>
        <position position="462"/>
    </location>
    <ligand>
        <name>Mg(2+)</name>
        <dbReference type="ChEBI" id="CHEBI:18420"/>
    </ligand>
</feature>
<feature type="binding site" evidence="1">
    <location>
        <position position="464"/>
    </location>
    <ligand>
        <name>Mg(2+)</name>
        <dbReference type="ChEBI" id="CHEBI:18420"/>
    </ligand>
</feature>
<feature type="binding site" evidence="1">
    <location>
        <position position="819"/>
    </location>
    <ligand>
        <name>Zn(2+)</name>
        <dbReference type="ChEBI" id="CHEBI:29105"/>
        <label>2</label>
    </ligand>
</feature>
<feature type="binding site" evidence="1">
    <location>
        <position position="893"/>
    </location>
    <ligand>
        <name>Zn(2+)</name>
        <dbReference type="ChEBI" id="CHEBI:29105"/>
        <label>2</label>
    </ligand>
</feature>
<feature type="binding site" evidence="1">
    <location>
        <position position="900"/>
    </location>
    <ligand>
        <name>Zn(2+)</name>
        <dbReference type="ChEBI" id="CHEBI:29105"/>
        <label>2</label>
    </ligand>
</feature>
<feature type="binding site" evidence="1">
    <location>
        <position position="903"/>
    </location>
    <ligand>
        <name>Zn(2+)</name>
        <dbReference type="ChEBI" id="CHEBI:29105"/>
        <label>2</label>
    </ligand>
</feature>
<dbReference type="EC" id="2.7.7.6" evidence="1"/>
<dbReference type="EMBL" id="CP000086">
    <property type="protein sequence ID" value="ABC37639.1"/>
    <property type="molecule type" value="Genomic_DNA"/>
</dbReference>
<dbReference type="RefSeq" id="WP_009888293.1">
    <property type="nucleotide sequence ID" value="NZ_CP008786.1"/>
</dbReference>
<dbReference type="SMR" id="Q2SU20"/>
<dbReference type="GeneID" id="45122763"/>
<dbReference type="KEGG" id="bte:BTH_I3075"/>
<dbReference type="HOGENOM" id="CLU_000524_3_1_4"/>
<dbReference type="Proteomes" id="UP000001930">
    <property type="component" value="Chromosome I"/>
</dbReference>
<dbReference type="GO" id="GO:0000428">
    <property type="term" value="C:DNA-directed RNA polymerase complex"/>
    <property type="evidence" value="ECO:0007669"/>
    <property type="project" value="UniProtKB-KW"/>
</dbReference>
<dbReference type="GO" id="GO:0003677">
    <property type="term" value="F:DNA binding"/>
    <property type="evidence" value="ECO:0007669"/>
    <property type="project" value="UniProtKB-UniRule"/>
</dbReference>
<dbReference type="GO" id="GO:0003899">
    <property type="term" value="F:DNA-directed RNA polymerase activity"/>
    <property type="evidence" value="ECO:0007669"/>
    <property type="project" value="UniProtKB-UniRule"/>
</dbReference>
<dbReference type="GO" id="GO:0000287">
    <property type="term" value="F:magnesium ion binding"/>
    <property type="evidence" value="ECO:0007669"/>
    <property type="project" value="UniProtKB-UniRule"/>
</dbReference>
<dbReference type="GO" id="GO:0008270">
    <property type="term" value="F:zinc ion binding"/>
    <property type="evidence" value="ECO:0007669"/>
    <property type="project" value="UniProtKB-UniRule"/>
</dbReference>
<dbReference type="GO" id="GO:0006351">
    <property type="term" value="P:DNA-templated transcription"/>
    <property type="evidence" value="ECO:0007669"/>
    <property type="project" value="UniProtKB-UniRule"/>
</dbReference>
<dbReference type="CDD" id="cd02655">
    <property type="entry name" value="RNAP_beta'_C"/>
    <property type="match status" value="1"/>
</dbReference>
<dbReference type="CDD" id="cd01609">
    <property type="entry name" value="RNAP_beta'_N"/>
    <property type="match status" value="1"/>
</dbReference>
<dbReference type="FunFam" id="1.10.132.30:FF:000003">
    <property type="entry name" value="DNA-directed RNA polymerase subunit beta"/>
    <property type="match status" value="1"/>
</dbReference>
<dbReference type="FunFam" id="1.10.150.390:FF:000002">
    <property type="entry name" value="DNA-directed RNA polymerase subunit beta"/>
    <property type="match status" value="1"/>
</dbReference>
<dbReference type="FunFam" id="4.10.860.120:FF:000001">
    <property type="entry name" value="DNA-directed RNA polymerase subunit beta"/>
    <property type="match status" value="1"/>
</dbReference>
<dbReference type="Gene3D" id="1.10.132.30">
    <property type="match status" value="1"/>
</dbReference>
<dbReference type="Gene3D" id="1.10.150.390">
    <property type="match status" value="1"/>
</dbReference>
<dbReference type="Gene3D" id="1.10.1790.20">
    <property type="match status" value="1"/>
</dbReference>
<dbReference type="Gene3D" id="1.10.40.90">
    <property type="match status" value="1"/>
</dbReference>
<dbReference type="Gene3D" id="2.40.40.20">
    <property type="match status" value="1"/>
</dbReference>
<dbReference type="Gene3D" id="2.40.50.100">
    <property type="match status" value="3"/>
</dbReference>
<dbReference type="Gene3D" id="4.10.860.120">
    <property type="entry name" value="RNA polymerase II, clamp domain"/>
    <property type="match status" value="1"/>
</dbReference>
<dbReference type="Gene3D" id="1.10.274.100">
    <property type="entry name" value="RNA polymerase Rpb1, domain 3"/>
    <property type="match status" value="1"/>
</dbReference>
<dbReference type="HAMAP" id="MF_01322">
    <property type="entry name" value="RNApol_bact_RpoC"/>
    <property type="match status" value="1"/>
</dbReference>
<dbReference type="InterPro" id="IPR045867">
    <property type="entry name" value="DNA-dir_RpoC_beta_prime"/>
</dbReference>
<dbReference type="InterPro" id="IPR012754">
    <property type="entry name" value="DNA-dir_RpoC_beta_prime_bact"/>
</dbReference>
<dbReference type="InterPro" id="IPR000722">
    <property type="entry name" value="RNA_pol_asu"/>
</dbReference>
<dbReference type="InterPro" id="IPR006592">
    <property type="entry name" value="RNA_pol_N"/>
</dbReference>
<dbReference type="InterPro" id="IPR007080">
    <property type="entry name" value="RNA_pol_Rpb1_1"/>
</dbReference>
<dbReference type="InterPro" id="IPR007066">
    <property type="entry name" value="RNA_pol_Rpb1_3"/>
</dbReference>
<dbReference type="InterPro" id="IPR042102">
    <property type="entry name" value="RNA_pol_Rpb1_3_sf"/>
</dbReference>
<dbReference type="InterPro" id="IPR007083">
    <property type="entry name" value="RNA_pol_Rpb1_4"/>
</dbReference>
<dbReference type="InterPro" id="IPR007081">
    <property type="entry name" value="RNA_pol_Rpb1_5"/>
</dbReference>
<dbReference type="InterPro" id="IPR044893">
    <property type="entry name" value="RNA_pol_Rpb1_clamp_domain"/>
</dbReference>
<dbReference type="InterPro" id="IPR038120">
    <property type="entry name" value="Rpb1_funnel_sf"/>
</dbReference>
<dbReference type="NCBIfam" id="TIGR02386">
    <property type="entry name" value="rpoC_TIGR"/>
    <property type="match status" value="1"/>
</dbReference>
<dbReference type="PANTHER" id="PTHR19376">
    <property type="entry name" value="DNA-DIRECTED RNA POLYMERASE"/>
    <property type="match status" value="1"/>
</dbReference>
<dbReference type="PANTHER" id="PTHR19376:SF54">
    <property type="entry name" value="DNA-DIRECTED RNA POLYMERASE SUBUNIT BETA"/>
    <property type="match status" value="1"/>
</dbReference>
<dbReference type="Pfam" id="PF04997">
    <property type="entry name" value="RNA_pol_Rpb1_1"/>
    <property type="match status" value="1"/>
</dbReference>
<dbReference type="Pfam" id="PF00623">
    <property type="entry name" value="RNA_pol_Rpb1_2"/>
    <property type="match status" value="2"/>
</dbReference>
<dbReference type="Pfam" id="PF04983">
    <property type="entry name" value="RNA_pol_Rpb1_3"/>
    <property type="match status" value="1"/>
</dbReference>
<dbReference type="Pfam" id="PF05000">
    <property type="entry name" value="RNA_pol_Rpb1_4"/>
    <property type="match status" value="1"/>
</dbReference>
<dbReference type="Pfam" id="PF04998">
    <property type="entry name" value="RNA_pol_Rpb1_5"/>
    <property type="match status" value="1"/>
</dbReference>
<dbReference type="SMART" id="SM00663">
    <property type="entry name" value="RPOLA_N"/>
    <property type="match status" value="1"/>
</dbReference>
<dbReference type="SUPFAM" id="SSF64484">
    <property type="entry name" value="beta and beta-prime subunits of DNA dependent RNA-polymerase"/>
    <property type="match status" value="1"/>
</dbReference>
<sequence length="1412" mass="156126">MKALLDLFKQVQQEEIFDAIKIGLASPDKIRSWSFGEVKKPETINYRTFKPERDGLFCAKIFGPIKDYECLCGKYKRLKHRGVICEKCGVEVTLAKVRRERMGHIELASPVAHIWFLKSLPSRLGMVLDMTLRDIERVLYFEAYVVIDPGMTPLKARQIMTEEDYYNKVEEYGDEFRAEMGAEGVRELLRSINIDEQVETLRTELKNTGSEAKIKKYAKRLKVLEAFQRSGIKPDWMILEVLPVLPPELRPLVPLDGGRFATSDLNDLYRRVINRNNRLKRLLELKAPEIIVRNEKRMLQEAVDSLLDNGRRGKAMTGANKRPLKSLADMIKGKGGRFRQNLLGKRVDYSGRSVIVVGPTLKLHQCGLPKLMALELFKPFIFNKLEVMGVATTIKAAKKEVENQTPVVWDILEEVIREHPVMLNRAPTLHRLGIQAFEPVLIEGKAIQLHPLVCAAFNADFDGDQMAVHVPLSLEAQMEARTLMLASNNVLFPANGDPSIVPSQDIVLGLYYATREAINGKGEGLSFTGVSEVIRAYENKEVELASRVNVRITEMVRNEDTSEGAPQFVPKISLYATTVGRAILSEILPPGLPFSVLNKPLKKKEISRLINTAFRKCGLRATVVFADQLMQSGFRLATRAGISICVDDMLVPTQKEQIVGDAAKKVKEYDRQYMSGLVTAQERYNNVVDIWSATSEAVGKAMMEQLSTEPVVDRDGNETRQESFNSIYMMADSGARGSAVQIRQLAGMRGLMAKPDGSIIETPITANFREGLNVLQYFISTHGARKGLADTALKTANSGYLTRRLVDVTQDLVVVEDDCGTSNGVAMKALVEGGEVVEALRDRILGRVAASDVVNPETQETLYEAGTLLDETAVEDIERLGIDEVRVRTALTCETRYGLCASCYGRDLGRGSLVNVGEAVGVIAAQSIGEPGTQLTMRTFHIGGAASRAAVASSVEAKSNGTVRFTATMRYVTNAKGEQIVISRSGEAMITDDIGRERERHKVPYGATLLQLDGAQIKAGTQLATWDPLTRPIITEYGGTVKFENVEEGVTVAKQIDDVTGLSTLVVIDVKRRGSQASKSVRPQVKLLDANGEEVKIPGTEHAVQIGFQVGALITVKDGQQVQVGEVLARIPTEAQKTRDITGGLPRVAELFEARSPKDAGILAEVTGTTSFGKDTKGKQRLVITDLEGNQHEFLIAKEKQVLVHDAQVVNKGEMIVDGPADPHDILRLQGIEALSRYIVDEVQDVYRLQGVKINDKHIEVIVRQMLRRVQIVDNGDTRFIPGEQVERSDMLDENDRMIAEGKRPATYENILLGITKASLSTDSFISAASFQETTRVLTEAAIMGKRDDLRGLKENVIVGRLIPAGTGLAFHKARKAKEQSDRERFDQIAAEEAFEFGTPSTPAEEPQHPAE</sequence>
<reference key="1">
    <citation type="journal article" date="2005" name="BMC Genomics">
        <title>Bacterial genome adaptation to niches: divergence of the potential virulence genes in three Burkholderia species of different survival strategies.</title>
        <authorList>
            <person name="Kim H.S."/>
            <person name="Schell M.A."/>
            <person name="Yu Y."/>
            <person name="Ulrich R.L."/>
            <person name="Sarria S.H."/>
            <person name="Nierman W.C."/>
            <person name="DeShazer D."/>
        </authorList>
    </citation>
    <scope>NUCLEOTIDE SEQUENCE [LARGE SCALE GENOMIC DNA]</scope>
    <source>
        <strain>ATCC 700388 / DSM 13276 / CCUG 48851 / CIP 106301 / E264</strain>
    </source>
</reference>
<organism>
    <name type="scientific">Burkholderia thailandensis (strain ATCC 700388 / DSM 13276 / CCUG 48851 / CIP 106301 / E264)</name>
    <dbReference type="NCBI Taxonomy" id="271848"/>
    <lineage>
        <taxon>Bacteria</taxon>
        <taxon>Pseudomonadati</taxon>
        <taxon>Pseudomonadota</taxon>
        <taxon>Betaproteobacteria</taxon>
        <taxon>Burkholderiales</taxon>
        <taxon>Burkholderiaceae</taxon>
        <taxon>Burkholderia</taxon>
        <taxon>pseudomallei group</taxon>
    </lineage>
</organism>
<proteinExistence type="inferred from homology"/>
<keyword id="KW-0240">DNA-directed RNA polymerase</keyword>
<keyword id="KW-0460">Magnesium</keyword>
<keyword id="KW-0479">Metal-binding</keyword>
<keyword id="KW-0548">Nucleotidyltransferase</keyword>
<keyword id="KW-0804">Transcription</keyword>
<keyword id="KW-0808">Transferase</keyword>
<keyword id="KW-0862">Zinc</keyword>
<accession>Q2SU20</accession>